<reference key="1">
    <citation type="journal article" date="2004" name="Nat. Genet.">
        <title>Evidence in the Legionella pneumophila genome for exploitation of host cell functions and high genome plasticity.</title>
        <authorList>
            <person name="Cazalet C."/>
            <person name="Rusniok C."/>
            <person name="Brueggemann H."/>
            <person name="Zidane N."/>
            <person name="Magnier A."/>
            <person name="Ma L."/>
            <person name="Tichit M."/>
            <person name="Jarraud S."/>
            <person name="Bouchier C."/>
            <person name="Vandenesch F."/>
            <person name="Kunst F."/>
            <person name="Etienne J."/>
            <person name="Glaser P."/>
            <person name="Buchrieser C."/>
        </authorList>
    </citation>
    <scope>NUCLEOTIDE SEQUENCE [LARGE SCALE GENOMIC DNA]</scope>
    <source>
        <strain>Paris</strain>
    </source>
</reference>
<comment type="catalytic activity">
    <reaction evidence="1">
        <text>L-histidinol phosphate + 2-oxoglutarate = 3-(imidazol-4-yl)-2-oxopropyl phosphate + L-glutamate</text>
        <dbReference type="Rhea" id="RHEA:23744"/>
        <dbReference type="ChEBI" id="CHEBI:16810"/>
        <dbReference type="ChEBI" id="CHEBI:29985"/>
        <dbReference type="ChEBI" id="CHEBI:57766"/>
        <dbReference type="ChEBI" id="CHEBI:57980"/>
        <dbReference type="EC" id="2.6.1.9"/>
    </reaction>
</comment>
<comment type="cofactor">
    <cofactor evidence="1">
        <name>pyridoxal 5'-phosphate</name>
        <dbReference type="ChEBI" id="CHEBI:597326"/>
    </cofactor>
</comment>
<comment type="pathway">
    <text evidence="1">Amino-acid biosynthesis; L-histidine biosynthesis; L-histidine from 5-phospho-alpha-D-ribose 1-diphosphate: step 7/9.</text>
</comment>
<comment type="subunit">
    <text evidence="1">Homodimer.</text>
</comment>
<comment type="similarity">
    <text evidence="1">Belongs to the class-II pyridoxal-phosphate-dependent aminotransferase family. Histidinol-phosphate aminotransferase subfamily.</text>
</comment>
<accession>Q5X5X0</accession>
<organism>
    <name type="scientific">Legionella pneumophila (strain Paris)</name>
    <dbReference type="NCBI Taxonomy" id="297246"/>
    <lineage>
        <taxon>Bacteria</taxon>
        <taxon>Pseudomonadati</taxon>
        <taxon>Pseudomonadota</taxon>
        <taxon>Gammaproteobacteria</taxon>
        <taxon>Legionellales</taxon>
        <taxon>Legionellaceae</taxon>
        <taxon>Legionella</taxon>
    </lineage>
</organism>
<proteinExistence type="inferred from homology"/>
<keyword id="KW-0028">Amino-acid biosynthesis</keyword>
<keyword id="KW-0032">Aminotransferase</keyword>
<keyword id="KW-0368">Histidine biosynthesis</keyword>
<keyword id="KW-0663">Pyridoxal phosphate</keyword>
<keyword id="KW-0808">Transferase</keyword>
<evidence type="ECO:0000255" key="1">
    <source>
        <dbReference type="HAMAP-Rule" id="MF_01023"/>
    </source>
</evidence>
<dbReference type="EC" id="2.6.1.9" evidence="1"/>
<dbReference type="EMBL" id="CR628336">
    <property type="protein sequence ID" value="CAH12351.1"/>
    <property type="molecule type" value="Genomic_DNA"/>
</dbReference>
<dbReference type="SMR" id="Q5X5X0"/>
<dbReference type="KEGG" id="lpp:lpp1200"/>
<dbReference type="LegioList" id="lpp1200"/>
<dbReference type="HOGENOM" id="CLU_017584_3_1_6"/>
<dbReference type="UniPathway" id="UPA00031">
    <property type="reaction ID" value="UER00012"/>
</dbReference>
<dbReference type="GO" id="GO:0004400">
    <property type="term" value="F:histidinol-phosphate transaminase activity"/>
    <property type="evidence" value="ECO:0007669"/>
    <property type="project" value="UniProtKB-UniRule"/>
</dbReference>
<dbReference type="GO" id="GO:0030170">
    <property type="term" value="F:pyridoxal phosphate binding"/>
    <property type="evidence" value="ECO:0007669"/>
    <property type="project" value="InterPro"/>
</dbReference>
<dbReference type="GO" id="GO:0000105">
    <property type="term" value="P:L-histidine biosynthetic process"/>
    <property type="evidence" value="ECO:0007669"/>
    <property type="project" value="UniProtKB-UniRule"/>
</dbReference>
<dbReference type="CDD" id="cd00609">
    <property type="entry name" value="AAT_like"/>
    <property type="match status" value="1"/>
</dbReference>
<dbReference type="Gene3D" id="3.90.1150.10">
    <property type="entry name" value="Aspartate Aminotransferase, domain 1"/>
    <property type="match status" value="1"/>
</dbReference>
<dbReference type="Gene3D" id="3.40.640.10">
    <property type="entry name" value="Type I PLP-dependent aspartate aminotransferase-like (Major domain)"/>
    <property type="match status" value="1"/>
</dbReference>
<dbReference type="HAMAP" id="MF_01023">
    <property type="entry name" value="HisC_aminotrans_2"/>
    <property type="match status" value="1"/>
</dbReference>
<dbReference type="InterPro" id="IPR001917">
    <property type="entry name" value="Aminotrans_II_pyridoxalP_BS"/>
</dbReference>
<dbReference type="InterPro" id="IPR004839">
    <property type="entry name" value="Aminotransferase_I/II_large"/>
</dbReference>
<dbReference type="InterPro" id="IPR005861">
    <property type="entry name" value="HisP_aminotrans"/>
</dbReference>
<dbReference type="InterPro" id="IPR015424">
    <property type="entry name" value="PyrdxlP-dep_Trfase"/>
</dbReference>
<dbReference type="InterPro" id="IPR015421">
    <property type="entry name" value="PyrdxlP-dep_Trfase_major"/>
</dbReference>
<dbReference type="InterPro" id="IPR015422">
    <property type="entry name" value="PyrdxlP-dep_Trfase_small"/>
</dbReference>
<dbReference type="NCBIfam" id="TIGR01141">
    <property type="entry name" value="hisC"/>
    <property type="match status" value="1"/>
</dbReference>
<dbReference type="PANTHER" id="PTHR42885:SF2">
    <property type="entry name" value="HISTIDINOL-PHOSPHATE AMINOTRANSFERASE"/>
    <property type="match status" value="1"/>
</dbReference>
<dbReference type="PANTHER" id="PTHR42885">
    <property type="entry name" value="HISTIDINOL-PHOSPHATE AMINOTRANSFERASE-RELATED"/>
    <property type="match status" value="1"/>
</dbReference>
<dbReference type="Pfam" id="PF00155">
    <property type="entry name" value="Aminotran_1_2"/>
    <property type="match status" value="1"/>
</dbReference>
<dbReference type="SUPFAM" id="SSF53383">
    <property type="entry name" value="PLP-dependent transferases"/>
    <property type="match status" value="1"/>
</dbReference>
<dbReference type="PROSITE" id="PS00599">
    <property type="entry name" value="AA_TRANSFER_CLASS_2"/>
    <property type="match status" value="1"/>
</dbReference>
<name>HIS81_LEGPA</name>
<gene>
    <name evidence="1" type="primary">hisC1</name>
    <name type="ordered locus">lpp1200</name>
</gene>
<sequence length="364" mass="41331">MSILNLVRTDLLNSQNYVPGGESARYRSHANELPWSPVTMGEHNLNYYPNIGLQIELQNQLAKRYQIYSDQIILTRGSDDGIDLTTRFFLTAGKDAFMQFPPTFPMYAFYVRLQQAELIECPLDRRTNFRLTLDQIENSWKPNCKVIMFCSPNNPTGNLVDLNLIAKTCELYANQSIIVVDEAYIEFANAPSATSLIGEFENLIVLRTLSKAFGLAGLRLGCIIAQSPIIQAFNKIIAPYSIATPSMELAKRALNNSDWFTKTIEQIKSSRAWVIKKFADNPIIEKIYPTETNFILIQTRFSKQLTTWLARYGIAVRDFPSSSLLHDHLRITVGNDEQNQLLINALSSFNADVAGLNYEKDFIY</sequence>
<feature type="chain" id="PRO_0000153379" description="Histidinol-phosphate aminotransferase 1">
    <location>
        <begin position="1"/>
        <end position="364"/>
    </location>
</feature>
<feature type="modified residue" description="N6-(pyridoxal phosphate)lysine" evidence="1">
    <location>
        <position position="211"/>
    </location>
</feature>
<protein>
    <recommendedName>
        <fullName evidence="1">Histidinol-phosphate aminotransferase 1</fullName>
        <ecNumber evidence="1">2.6.1.9</ecNumber>
    </recommendedName>
    <alternativeName>
        <fullName evidence="1">Imidazole acetol-phosphate transaminase 1</fullName>
    </alternativeName>
</protein>